<dbReference type="EMBL" id="AC118288">
    <property type="protein sequence ID" value="AAT85176.1"/>
    <property type="molecule type" value="Genomic_DNA"/>
</dbReference>
<dbReference type="EMBL" id="AP008211">
    <property type="protein sequence ID" value="BAF16477.1"/>
    <property type="molecule type" value="Genomic_DNA"/>
</dbReference>
<dbReference type="EMBL" id="AP014961">
    <property type="protein sequence ID" value="BAS92132.1"/>
    <property type="molecule type" value="Genomic_DNA"/>
</dbReference>
<dbReference type="EMBL" id="AP014961">
    <property type="protein sequence ID" value="BAS92133.1"/>
    <property type="molecule type" value="Genomic_DNA"/>
</dbReference>
<dbReference type="EMBL" id="AK063482">
    <property type="protein sequence ID" value="BAG88726.1"/>
    <property type="molecule type" value="mRNA"/>
</dbReference>
<dbReference type="RefSeq" id="XP_015639540.1">
    <property type="nucleotide sequence ID" value="XM_015784054.1"/>
</dbReference>
<dbReference type="SMR" id="Q6AUQ7"/>
<dbReference type="FunCoup" id="Q6AUQ7">
    <property type="interactions" value="2207"/>
</dbReference>
<dbReference type="STRING" id="39947.Q6AUQ7"/>
<dbReference type="REBASE" id="11927">
    <property type="entry name" value="M.OsaDRM3P"/>
</dbReference>
<dbReference type="PaxDb" id="39947-Q6AUQ7"/>
<dbReference type="EnsemblPlants" id="Os05t0133900-02">
    <molecule id="Q6AUQ7-1"/>
    <property type="protein sequence ID" value="Os05t0133900-02"/>
    <property type="gene ID" value="Os05g0133900"/>
</dbReference>
<dbReference type="Gramene" id="Os05t0133900-02">
    <molecule id="Q6AUQ7-1"/>
    <property type="protein sequence ID" value="Os05t0133900-02"/>
    <property type="gene ID" value="Os05g0133900"/>
</dbReference>
<dbReference type="KEGG" id="dosa:Os05g0133900"/>
<dbReference type="eggNOG" id="ENOG502QS8G">
    <property type="taxonomic scope" value="Eukaryota"/>
</dbReference>
<dbReference type="HOGENOM" id="CLU_006805_3_1_1"/>
<dbReference type="InParanoid" id="Q6AUQ7"/>
<dbReference type="OMA" id="HQCKLAN"/>
<dbReference type="OrthoDB" id="641149at2759"/>
<dbReference type="Proteomes" id="UP000000763">
    <property type="component" value="Chromosome 5"/>
</dbReference>
<dbReference type="Proteomes" id="UP000059680">
    <property type="component" value="Chromosome 5"/>
</dbReference>
<dbReference type="GO" id="GO:0005634">
    <property type="term" value="C:nucleus"/>
    <property type="evidence" value="ECO:0000318"/>
    <property type="project" value="GO_Central"/>
</dbReference>
<dbReference type="GO" id="GO:0003677">
    <property type="term" value="F:DNA binding"/>
    <property type="evidence" value="ECO:0007669"/>
    <property type="project" value="UniProtKB-KW"/>
</dbReference>
<dbReference type="GO" id="GO:0008168">
    <property type="term" value="F:methyltransferase activity"/>
    <property type="evidence" value="ECO:0007669"/>
    <property type="project" value="UniProtKB-KW"/>
</dbReference>
<dbReference type="GO" id="GO:0032259">
    <property type="term" value="P:methylation"/>
    <property type="evidence" value="ECO:0007669"/>
    <property type="project" value="UniProtKB-KW"/>
</dbReference>
<dbReference type="Gene3D" id="3.40.50.150">
    <property type="entry name" value="Vaccinia Virus protein VP39"/>
    <property type="match status" value="2"/>
</dbReference>
<dbReference type="InterPro" id="IPR029063">
    <property type="entry name" value="SAM-dependent_MTases_sf"/>
</dbReference>
<dbReference type="InterPro" id="IPR030380">
    <property type="entry name" value="SAM_MeTfrase_DRM"/>
</dbReference>
<dbReference type="PANTHER" id="PTHR23068">
    <property type="entry name" value="DNA CYTOSINE-5- -METHYLTRANSFERASE 3-RELATED"/>
    <property type="match status" value="1"/>
</dbReference>
<dbReference type="PANTHER" id="PTHR23068:SF11">
    <property type="entry name" value="INACTIVE DNA (CYTOSINE-5)-METHYLTRANSFERASE DRM3-RELATED"/>
    <property type="match status" value="1"/>
</dbReference>
<dbReference type="SUPFAM" id="SSF53335">
    <property type="entry name" value="S-adenosyl-L-methionine-dependent methyltransferases"/>
    <property type="match status" value="2"/>
</dbReference>
<dbReference type="PROSITE" id="PS51680">
    <property type="entry name" value="SAM_MT_DRM"/>
    <property type="match status" value="1"/>
</dbReference>
<gene>
    <name evidence="5" type="primary">DRM3</name>
    <name evidence="7" type="ordered locus">Os05g0133900</name>
    <name evidence="5" type="ordered locus">LOC_Os05g04330</name>
    <name evidence="6" type="ORF">OSJNBa0077L08.12</name>
</gene>
<name>DRM3_ORYSJ</name>
<proteinExistence type="evidence at transcript level"/>
<accession>Q6AUQ7</accession>
<accession>Q0DKZ6</accession>
<evidence type="ECO:0000250" key="1">
    <source>
        <dbReference type="UniProtKB" id="Q10SU5"/>
    </source>
</evidence>
<evidence type="ECO:0000255" key="2">
    <source>
        <dbReference type="PROSITE-ProRule" id="PRU00212"/>
    </source>
</evidence>
<evidence type="ECO:0000255" key="3">
    <source>
        <dbReference type="PROSITE-ProRule" id="PRU01017"/>
    </source>
</evidence>
<evidence type="ECO:0000256" key="4">
    <source>
        <dbReference type="SAM" id="MobiDB-lite"/>
    </source>
</evidence>
<evidence type="ECO:0000305" key="5"/>
<evidence type="ECO:0000312" key="6">
    <source>
        <dbReference type="EMBL" id="AAT85176.1"/>
    </source>
</evidence>
<evidence type="ECO:0000312" key="7">
    <source>
        <dbReference type="EMBL" id="BAS92133.1"/>
    </source>
</evidence>
<sequence length="680" mass="76131">MVKVEDDVEGSGINASVGDLRDAAVNPQPALLRATVKEEEGQPSSSSSHVRSQFIGMGFSPMLVDRVLQKHGDRDSDTILEALLSQSALQKSGSESGSLGDLFDSDNEENSSHFAPRKEVIQDIKVEADSSSEKRSYLLSTMNFSQREVDLALNQLGEEASLEQLVDFIVTGQVSGCSGGNENGDASNEVKDESLFGVMDKTLHLLQMGFTEEEVSSVIDKAGPEATVLELADTIFARRIASSIEQKEVKVEPDFLDETETSYSAYHPSNSGLRYYDDDHDNIRIKRAKHMFIDDSAGSSSRAGNQPNLDPWLKDHRATTSDGSVKEEFDAMTPGIRRNVRSDVANPPYFLYGNVVEIPKATWRQLSEFLYNVEPEFVNSQFFSALSRKEGYIHNLPTEGRRNLVPRSPMTIEEAFPFTRQCWPSWDTRKQLNSVATEVAGIEQLCERLGKMVRDSGGYLSQEKKTHIMHQCKLANLIWVGPDRLSPLDPQQVERILGYPRKHTNLFGLNPQDRIEAMRYSFQTDTLGYLLSVLKDLYPDGLRVLSIYSGIGGAAIALHRLGIPLQCVVSVDQSDTNRKILRRWWSNTEQKGQLRQINTIWKLKINVLEDLVKEFGGFDIIIGGNFSSCKGGTTVNSSMGMDSNQFFEYVRVVQRVKHIMGRLQVRAHESARHRHRSPSN</sequence>
<feature type="chain" id="PRO_0000438154" description="Probable inactive DNA (cytosine-5)-methyltransferase DRM3">
    <location>
        <begin position="1"/>
        <end position="680"/>
    </location>
</feature>
<feature type="domain" description="UBA 1" evidence="2">
    <location>
        <begin position="45"/>
        <end position="86"/>
    </location>
</feature>
<feature type="domain" description="UBA 2" evidence="2">
    <location>
        <begin position="194"/>
        <end position="235"/>
    </location>
</feature>
<feature type="domain" description="SAM-dependent MTase DRM-type" evidence="3">
    <location>
        <begin position="336"/>
        <end position="663"/>
    </location>
</feature>
<feature type="region of interest" description="Disordered" evidence="4">
    <location>
        <begin position="1"/>
        <end position="24"/>
    </location>
</feature>
<feature type="region of interest" description="Disordered" evidence="4">
    <location>
        <begin position="91"/>
        <end position="113"/>
    </location>
</feature>
<feature type="splice variant" id="VSP_058617" description="In isoform 2.">
    <original>VRA</original>
    <variation>NRG</variation>
    <location>
        <begin position="665"/>
        <end position="667"/>
    </location>
</feature>
<feature type="splice variant" id="VSP_058618" description="In isoform 2.">
    <location>
        <begin position="668"/>
        <end position="680"/>
    </location>
</feature>
<keyword id="KW-0025">Alternative splicing</keyword>
<keyword id="KW-0238">DNA-binding</keyword>
<keyword id="KW-0489">Methyltransferase</keyword>
<keyword id="KW-0539">Nucleus</keyword>
<keyword id="KW-1185">Reference proteome</keyword>
<keyword id="KW-0677">Repeat</keyword>
<keyword id="KW-0949">S-adenosyl-L-methionine</keyword>
<keyword id="KW-0808">Transferase</keyword>
<protein>
    <recommendedName>
        <fullName evidence="5">Probable inactive DNA (cytosine-5)-methyltransferase DRM3</fullName>
    </recommendedName>
    <alternativeName>
        <fullName evidence="5">Protein DOMAINS REARRANGED METHYLASE 3</fullName>
    </alternativeName>
</protein>
<organism>
    <name type="scientific">Oryza sativa subsp. japonica</name>
    <name type="common">Rice</name>
    <dbReference type="NCBI Taxonomy" id="39947"/>
    <lineage>
        <taxon>Eukaryota</taxon>
        <taxon>Viridiplantae</taxon>
        <taxon>Streptophyta</taxon>
        <taxon>Embryophyta</taxon>
        <taxon>Tracheophyta</taxon>
        <taxon>Spermatophyta</taxon>
        <taxon>Magnoliopsida</taxon>
        <taxon>Liliopsida</taxon>
        <taxon>Poales</taxon>
        <taxon>Poaceae</taxon>
        <taxon>BOP clade</taxon>
        <taxon>Oryzoideae</taxon>
        <taxon>Oryzeae</taxon>
        <taxon>Oryzinae</taxon>
        <taxon>Oryza</taxon>
        <taxon>Oryza sativa</taxon>
    </lineage>
</organism>
<reference key="1">
    <citation type="journal article" date="2005" name="Mol. Genet. Genomics">
        <title>A fine physical map of the rice chromosome 5.</title>
        <authorList>
            <person name="Cheng C.-H."/>
            <person name="Chung M.C."/>
            <person name="Liu S.-M."/>
            <person name="Chen S.-K."/>
            <person name="Kao F.Y."/>
            <person name="Lin S.-J."/>
            <person name="Hsiao S.-H."/>
            <person name="Tseng I.C."/>
            <person name="Hsing Y.-I.C."/>
            <person name="Wu H.-P."/>
            <person name="Chen C.-S."/>
            <person name="Shaw J.-F."/>
            <person name="Wu J."/>
            <person name="Matsumoto T."/>
            <person name="Sasaki T."/>
            <person name="Chen H.-C."/>
            <person name="Chow T.-Y."/>
        </authorList>
    </citation>
    <scope>NUCLEOTIDE SEQUENCE [LARGE SCALE GENOMIC DNA]</scope>
    <source>
        <strain>cv. Nipponbare</strain>
    </source>
</reference>
<reference key="2">
    <citation type="journal article" date="2005" name="Nature">
        <title>The map-based sequence of the rice genome.</title>
        <authorList>
            <consortium name="International rice genome sequencing project (IRGSP)"/>
        </authorList>
    </citation>
    <scope>NUCLEOTIDE SEQUENCE [LARGE SCALE GENOMIC DNA]</scope>
    <source>
        <strain>cv. Nipponbare</strain>
    </source>
</reference>
<reference key="3">
    <citation type="journal article" date="2008" name="Nucleic Acids Res.">
        <title>The rice annotation project database (RAP-DB): 2008 update.</title>
        <authorList>
            <consortium name="The rice annotation project (RAP)"/>
        </authorList>
    </citation>
    <scope>GENOME REANNOTATION</scope>
    <source>
        <strain>cv. Nipponbare</strain>
    </source>
</reference>
<reference key="4">
    <citation type="journal article" date="2013" name="Rice">
        <title>Improvement of the Oryza sativa Nipponbare reference genome using next generation sequence and optical map data.</title>
        <authorList>
            <person name="Kawahara Y."/>
            <person name="de la Bastide M."/>
            <person name="Hamilton J.P."/>
            <person name="Kanamori H."/>
            <person name="McCombie W.R."/>
            <person name="Ouyang S."/>
            <person name="Schwartz D.C."/>
            <person name="Tanaka T."/>
            <person name="Wu J."/>
            <person name="Zhou S."/>
            <person name="Childs K.L."/>
            <person name="Davidson R.M."/>
            <person name="Lin H."/>
            <person name="Quesada-Ocampo L."/>
            <person name="Vaillancourt B."/>
            <person name="Sakai H."/>
            <person name="Lee S.S."/>
            <person name="Kim J."/>
            <person name="Numa H."/>
            <person name="Itoh T."/>
            <person name="Buell C.R."/>
            <person name="Matsumoto T."/>
        </authorList>
    </citation>
    <scope>GENOME REANNOTATION</scope>
    <source>
        <strain>cv. Nipponbare</strain>
    </source>
</reference>
<reference key="5">
    <citation type="journal article" date="2003" name="Science">
        <title>Collection, mapping, and annotation of over 28,000 cDNA clones from japonica rice.</title>
        <authorList>
            <consortium name="The rice full-length cDNA consortium"/>
        </authorList>
    </citation>
    <scope>NUCLEOTIDE SEQUENCE [LARGE SCALE MRNA]</scope>
    <source>
        <strain>cv. Nipponbare</strain>
    </source>
</reference>
<comment type="function">
    <text evidence="1">Involved in de novo DNA methylation. Involved in RNA-directed DNA methylation (RdDM).</text>
</comment>
<comment type="subcellular location">
    <subcellularLocation>
        <location evidence="5">Nucleus</location>
    </subcellularLocation>
</comment>
<comment type="alternative products">
    <event type="alternative splicing"/>
    <isoform>
        <id>Q6AUQ7-1</id>
        <name>1</name>
        <sequence type="displayed"/>
    </isoform>
    <isoform>
        <id>Q6AUQ7-2</id>
        <name>2</name>
        <sequence type="described" ref="VSP_058617 VSP_058618"/>
    </isoform>
</comment>
<comment type="similarity">
    <text evidence="3">Belongs to the class I-like SAM-binding methyltransferase superfamily. DRM-methyltransferase family.</text>
</comment>
<comment type="caution">
    <text>Lacks the conserved tripeptide Ser-Pro-Cys in position 625 necessary for the methyltransferase activity in DRM protein (AC Q9M548).</text>
</comment>